<dbReference type="EMBL" id="AY424650">
    <property type="protein sequence ID" value="AAR10361.1"/>
    <property type="molecule type" value="Genomic_DNA"/>
</dbReference>
<dbReference type="SMR" id="Q6TC45"/>
<dbReference type="Proteomes" id="UP000515165">
    <property type="component" value="Unplaced"/>
</dbReference>
<dbReference type="GO" id="GO:0005737">
    <property type="term" value="C:cytoplasm"/>
    <property type="evidence" value="ECO:0007669"/>
    <property type="project" value="UniProtKB-SubCell"/>
</dbReference>
<dbReference type="GO" id="GO:0016607">
    <property type="term" value="C:nuclear speck"/>
    <property type="evidence" value="ECO:0007669"/>
    <property type="project" value="UniProtKB-SubCell"/>
</dbReference>
<dbReference type="GO" id="GO:0005634">
    <property type="term" value="C:nucleus"/>
    <property type="evidence" value="ECO:0000250"/>
    <property type="project" value="UniProtKB"/>
</dbReference>
<dbReference type="GO" id="GO:0005516">
    <property type="term" value="F:calmodulin binding"/>
    <property type="evidence" value="ECO:0007669"/>
    <property type="project" value="UniProtKB-KW"/>
</dbReference>
<dbReference type="GO" id="GO:0001228">
    <property type="term" value="F:DNA-binding transcription activator activity, RNA polymerase II-specific"/>
    <property type="evidence" value="ECO:0007669"/>
    <property type="project" value="TreeGrafter"/>
</dbReference>
<dbReference type="GO" id="GO:0000978">
    <property type="term" value="F:RNA polymerase II cis-regulatory region sequence-specific DNA binding"/>
    <property type="evidence" value="ECO:0007669"/>
    <property type="project" value="TreeGrafter"/>
</dbReference>
<dbReference type="GO" id="GO:0030154">
    <property type="term" value="P:cell differentiation"/>
    <property type="evidence" value="ECO:0007669"/>
    <property type="project" value="UniProtKB-KW"/>
</dbReference>
<dbReference type="GO" id="GO:0030238">
    <property type="term" value="P:male sex determination"/>
    <property type="evidence" value="ECO:0007669"/>
    <property type="project" value="InterPro"/>
</dbReference>
<dbReference type="GO" id="GO:0007548">
    <property type="term" value="P:sex differentiation"/>
    <property type="evidence" value="ECO:0007669"/>
    <property type="project" value="UniProtKB-KW"/>
</dbReference>
<dbReference type="CDD" id="cd22034">
    <property type="entry name" value="HMG-box_SoxA_SRY"/>
    <property type="match status" value="1"/>
</dbReference>
<dbReference type="FunFam" id="1.10.30.10:FF:000002">
    <property type="entry name" value="transcription factor Sox-2"/>
    <property type="match status" value="1"/>
</dbReference>
<dbReference type="Gene3D" id="1.10.30.10">
    <property type="entry name" value="High mobility group box domain"/>
    <property type="match status" value="1"/>
</dbReference>
<dbReference type="InterPro" id="IPR009071">
    <property type="entry name" value="HMG_box_dom"/>
</dbReference>
<dbReference type="InterPro" id="IPR036910">
    <property type="entry name" value="HMG_box_dom_sf"/>
</dbReference>
<dbReference type="InterPro" id="IPR017253">
    <property type="entry name" value="SRY"/>
</dbReference>
<dbReference type="InterPro" id="IPR050140">
    <property type="entry name" value="SRY-related_HMG-box_TF-like"/>
</dbReference>
<dbReference type="PANTHER" id="PTHR10270:SF161">
    <property type="entry name" value="SEX-DETERMINING REGION Y PROTEIN"/>
    <property type="match status" value="1"/>
</dbReference>
<dbReference type="PANTHER" id="PTHR10270">
    <property type="entry name" value="SOX TRANSCRIPTION FACTOR"/>
    <property type="match status" value="1"/>
</dbReference>
<dbReference type="Pfam" id="PF00505">
    <property type="entry name" value="HMG_box"/>
    <property type="match status" value="1"/>
</dbReference>
<dbReference type="PIRSF" id="PIRSF037653">
    <property type="entry name" value="SRY"/>
    <property type="match status" value="1"/>
</dbReference>
<dbReference type="SMART" id="SM00398">
    <property type="entry name" value="HMG"/>
    <property type="match status" value="1"/>
</dbReference>
<dbReference type="SUPFAM" id="SSF47095">
    <property type="entry name" value="HMG-box"/>
    <property type="match status" value="1"/>
</dbReference>
<dbReference type="PROSITE" id="PS50118">
    <property type="entry name" value="HMG_BOX_2"/>
    <property type="match status" value="1"/>
</dbReference>
<sequence>MFGVLNSDDHRAAIQHRNILAFGRTSSELWTSNPTSNYWCETRGNGRDSGQNRVRRPMNAFMVWSRDQRRKVALENPQMQNSEISKQLGYQWKMLTEAEKWPFFEEAQRLQAVHREKYPDYKYRPRRKALPQKSDKLLPAASSSLLCRQVLVDKSYPFTYRDSCSRATHSHMEDQLSSSQPVNIANSLLQQEHHYSSTSLRGSPETLATHLSADPPFYPK</sequence>
<gene>
    <name type="primary">SRY</name>
    <name type="synonym">TDF</name>
</gene>
<accession>Q6TC45</accession>
<protein>
    <recommendedName>
        <fullName>Sex-determining region Y protein</fullName>
    </recommendedName>
    <alternativeName>
        <fullName>Testis-determining factor</fullName>
    </alternativeName>
</protein>
<comment type="function">
    <text evidence="1 2">Transcriptional regulator that controls a genetic switch in male development. It is necessary and sufficient for initiating male sex determination by directing the development of supporting cell precursors (pre-Sertoli cells) as Sertoli rather than granulosa cells. Involved in different aspects of gene regulation including promoter activation or repression. Binds to the DNA consensus sequence 5'-[AT]AACAA[AT]-3'. SRY HMG box recognizes DNA by partial intercalation in the minor groove and promotes DNA bending. Also involved in pre-mRNA splicing (By similarity). In male adult brain involved in the maintenance of motor functions of dopaminergic neurons (By similarity).</text>
</comment>
<comment type="subunit">
    <text evidence="2">Interacts with CALM, EP300, HDAC3, KPNB1, ZNF208 isoform KRAB-O, PARP1, SLC9A3R2 and WT1. The interaction with EP300 modulates its DNA-binding activity. The interaction with KPNB1 is sensitive to dissociation by Ran in the GTP-bound form. Interaction with PARP1 impaired its DNA-binding activity.</text>
</comment>
<comment type="subcellular location">
    <subcellularLocation>
        <location evidence="2">Nucleus speckle</location>
    </subcellularLocation>
    <subcellularLocation>
        <location evidence="2">Cytoplasm</location>
    </subcellularLocation>
    <subcellularLocation>
        <location evidence="2">Nucleus</location>
    </subcellularLocation>
</comment>
<comment type="similarity">
    <text evidence="5">Belongs to the SRY family.</text>
</comment>
<comment type="online information" name="Protein Spotlight">
    <link uri="https://www.proteinspotlight.org/back_issues/080"/>
    <text>The tenuous nature of sex - Issue 80 of March 2007</text>
</comment>
<feature type="chain" id="PRO_0000048711" description="Sex-determining region Y protein">
    <location>
        <begin position="1"/>
        <end position="220"/>
    </location>
</feature>
<feature type="DNA-binding region" description="HMG box" evidence="3">
    <location>
        <begin position="54"/>
        <end position="122"/>
    </location>
</feature>
<feature type="region of interest" description="Disordered" evidence="4">
    <location>
        <begin position="194"/>
        <end position="220"/>
    </location>
</feature>
<name>SRY_ZALCA</name>
<organism>
    <name type="scientific">Zalophus californianus</name>
    <name type="common">California sealion</name>
    <dbReference type="NCBI Taxonomy" id="9704"/>
    <lineage>
        <taxon>Eukaryota</taxon>
        <taxon>Metazoa</taxon>
        <taxon>Chordata</taxon>
        <taxon>Craniata</taxon>
        <taxon>Vertebrata</taxon>
        <taxon>Euteleostomi</taxon>
        <taxon>Mammalia</taxon>
        <taxon>Eutheria</taxon>
        <taxon>Laurasiatheria</taxon>
        <taxon>Carnivora</taxon>
        <taxon>Caniformia</taxon>
        <taxon>Pinnipedia</taxon>
        <taxon>Otariidae</taxon>
        <taxon>Zalophus</taxon>
    </lineage>
</organism>
<evidence type="ECO:0000250" key="1">
    <source>
        <dbReference type="UniProtKB" id="P36394"/>
    </source>
</evidence>
<evidence type="ECO:0000250" key="2">
    <source>
        <dbReference type="UniProtKB" id="Q05066"/>
    </source>
</evidence>
<evidence type="ECO:0000255" key="3">
    <source>
        <dbReference type="PROSITE-ProRule" id="PRU00267"/>
    </source>
</evidence>
<evidence type="ECO:0000256" key="4">
    <source>
        <dbReference type="SAM" id="MobiDB-lite"/>
    </source>
</evidence>
<evidence type="ECO:0000305" key="5"/>
<keyword id="KW-0010">Activator</keyword>
<keyword id="KW-0112">Calmodulin-binding</keyword>
<keyword id="KW-0963">Cytoplasm</keyword>
<keyword id="KW-0221">Differentiation</keyword>
<keyword id="KW-0238">DNA-binding</keyword>
<keyword id="KW-0539">Nucleus</keyword>
<keyword id="KW-0678">Repressor</keyword>
<keyword id="KW-0726">Sexual differentiation</keyword>
<keyword id="KW-0804">Transcription</keyword>
<keyword id="KW-0805">Transcription regulation</keyword>
<reference key="1">
    <citation type="submission" date="2003-09" db="EMBL/GenBank/DDBJ databases">
        <title>A phylogeny of the pinnipeds from mitochondrial and single copy nuclear gene sequences.</title>
        <authorList>
            <person name="Kinnear M.W."/>
            <person name="Walker G."/>
            <person name="Amos W."/>
        </authorList>
    </citation>
    <scope>NUCLEOTIDE SEQUENCE [GENOMIC DNA]</scope>
</reference>
<proteinExistence type="inferred from homology"/>